<feature type="chain" id="PRO_1000022235" description="Potassium-transporting ATPase potassium-binding subunit">
    <location>
        <begin position="1"/>
        <end position="556"/>
    </location>
</feature>
<feature type="transmembrane region" description="Helical" evidence="1">
    <location>
        <begin position="6"/>
        <end position="26"/>
    </location>
</feature>
<feature type="transmembrane region" description="Helical" evidence="1">
    <location>
        <begin position="65"/>
        <end position="85"/>
    </location>
</feature>
<feature type="transmembrane region" description="Helical" evidence="1">
    <location>
        <begin position="133"/>
        <end position="153"/>
    </location>
</feature>
<feature type="transmembrane region" description="Helical" evidence="1">
    <location>
        <begin position="176"/>
        <end position="196"/>
    </location>
</feature>
<feature type="transmembrane region" description="Helical" evidence="1">
    <location>
        <begin position="249"/>
        <end position="269"/>
    </location>
</feature>
<feature type="transmembrane region" description="Helical" evidence="1">
    <location>
        <begin position="283"/>
        <end position="303"/>
    </location>
</feature>
<feature type="transmembrane region" description="Helical" evidence="1">
    <location>
        <begin position="378"/>
        <end position="398"/>
    </location>
</feature>
<feature type="transmembrane region" description="Helical" evidence="1">
    <location>
        <begin position="419"/>
        <end position="439"/>
    </location>
</feature>
<feature type="transmembrane region" description="Helical" evidence="1">
    <location>
        <begin position="483"/>
        <end position="503"/>
    </location>
</feature>
<feature type="transmembrane region" description="Helical" evidence="1">
    <location>
        <begin position="526"/>
        <end position="546"/>
    </location>
</feature>
<dbReference type="EMBL" id="CP000518">
    <property type="protein sequence ID" value="ABL93484.1"/>
    <property type="molecule type" value="Genomic_DNA"/>
</dbReference>
<dbReference type="SMR" id="A1UKX6"/>
<dbReference type="STRING" id="189918.Mkms_4292"/>
<dbReference type="KEGG" id="mkm:Mkms_4292"/>
<dbReference type="HOGENOM" id="CLU_018614_3_0_11"/>
<dbReference type="OrthoDB" id="9763796at2"/>
<dbReference type="GO" id="GO:0005886">
    <property type="term" value="C:plasma membrane"/>
    <property type="evidence" value="ECO:0007669"/>
    <property type="project" value="UniProtKB-SubCell"/>
</dbReference>
<dbReference type="GO" id="GO:0008556">
    <property type="term" value="F:P-type potassium transmembrane transporter activity"/>
    <property type="evidence" value="ECO:0007669"/>
    <property type="project" value="InterPro"/>
</dbReference>
<dbReference type="GO" id="GO:0030955">
    <property type="term" value="F:potassium ion binding"/>
    <property type="evidence" value="ECO:0007669"/>
    <property type="project" value="UniProtKB-UniRule"/>
</dbReference>
<dbReference type="HAMAP" id="MF_00275">
    <property type="entry name" value="KdpA"/>
    <property type="match status" value="1"/>
</dbReference>
<dbReference type="InterPro" id="IPR004623">
    <property type="entry name" value="KdpA"/>
</dbReference>
<dbReference type="NCBIfam" id="TIGR00680">
    <property type="entry name" value="kdpA"/>
    <property type="match status" value="1"/>
</dbReference>
<dbReference type="PANTHER" id="PTHR30607">
    <property type="entry name" value="POTASSIUM-TRANSPORTING ATPASE A CHAIN"/>
    <property type="match status" value="1"/>
</dbReference>
<dbReference type="PANTHER" id="PTHR30607:SF2">
    <property type="entry name" value="POTASSIUM-TRANSPORTING ATPASE POTASSIUM-BINDING SUBUNIT"/>
    <property type="match status" value="1"/>
</dbReference>
<dbReference type="Pfam" id="PF03814">
    <property type="entry name" value="KdpA"/>
    <property type="match status" value="1"/>
</dbReference>
<dbReference type="PIRSF" id="PIRSF001294">
    <property type="entry name" value="K_ATPaseA"/>
    <property type="match status" value="1"/>
</dbReference>
<keyword id="KW-1003">Cell membrane</keyword>
<keyword id="KW-0406">Ion transport</keyword>
<keyword id="KW-0472">Membrane</keyword>
<keyword id="KW-0630">Potassium</keyword>
<keyword id="KW-0633">Potassium transport</keyword>
<keyword id="KW-0812">Transmembrane</keyword>
<keyword id="KW-1133">Transmembrane helix</keyword>
<keyword id="KW-0813">Transport</keyword>
<comment type="function">
    <text evidence="1">Part of the high-affinity ATP-driven potassium transport (or Kdp) system, which catalyzes the hydrolysis of ATP coupled with the electrogenic transport of potassium into the cytoplasm. This subunit binds the extracellular potassium ions and delivers the ions to the membrane domain of KdpB through an intramembrane tunnel.</text>
</comment>
<comment type="subunit">
    <text evidence="1">The system is composed of three essential subunits: KdpA, KdpB and KdpC.</text>
</comment>
<comment type="subcellular location">
    <subcellularLocation>
        <location evidence="1">Cell membrane</location>
        <topology evidence="1">Multi-pass membrane protein</topology>
    </subcellularLocation>
</comment>
<comment type="similarity">
    <text evidence="1">Belongs to the KdpA family.</text>
</comment>
<sequence length="556" mass="58558">MSTTTAGILFALSLALALAAVHVPLGDYMYRVYASEKHWRAERVAYRIIGADPAAEQGWGSYARSVLAFSAVSILFLFGLQLLQGRLPLHLNDPATEMTPALAWNTAVSFVTNTNWQAYSGESTQGHLVQMAGLSVQNFVSAAVGMAVAMAFVRGLARRDTGELGNFWVDLIRGSLRILLPLSIIGAIILVSGGVIQNFALHDTVVSTLSGAQQTIPGGPVASQEAIKELGTNGGGFFNANSAHPFENPTTWTNWVEIFLLSCIAFSLPRTFGRMVGSRKQGAAILAVMAVIATLSLSLMMLFQSQTHGTVPTAVGSATEGVEQRFGVADSAVFADLTTLTSTGAVDSFHDSYTSLGGLMTLFNMQLGEVAPGGVGSGLYSMLVLAVITVFVAGLMVGRTPEYLGKKITPREIKLAATYFLVTPLIVLIGTAVAMALPGQRDGMLNTGPHGLSEVLYAFTSAGNNNGSAFAGLSVNTEWYNTALGLAMVFGRFLPIILVLALAGSFARQGRTPESVGTLPTHRPQFVGMVTGVTLILVALTFLPVLALGPLAEGLH</sequence>
<gene>
    <name evidence="1" type="primary">kdpA</name>
    <name type="ordered locus">Mkms_4292</name>
</gene>
<organism>
    <name type="scientific">Mycobacterium sp. (strain KMS)</name>
    <dbReference type="NCBI Taxonomy" id="189918"/>
    <lineage>
        <taxon>Bacteria</taxon>
        <taxon>Bacillati</taxon>
        <taxon>Actinomycetota</taxon>
        <taxon>Actinomycetes</taxon>
        <taxon>Mycobacteriales</taxon>
        <taxon>Mycobacteriaceae</taxon>
        <taxon>Mycobacterium</taxon>
    </lineage>
</organism>
<protein>
    <recommendedName>
        <fullName evidence="1">Potassium-transporting ATPase potassium-binding subunit</fullName>
    </recommendedName>
    <alternativeName>
        <fullName evidence="1">ATP phosphohydrolase [potassium-transporting] A chain</fullName>
    </alternativeName>
    <alternativeName>
        <fullName evidence="1">Potassium-binding and translocating subunit A</fullName>
    </alternativeName>
    <alternativeName>
        <fullName evidence="1">Potassium-translocating ATPase A chain</fullName>
    </alternativeName>
</protein>
<name>KDPA_MYCSK</name>
<reference key="1">
    <citation type="submission" date="2006-12" db="EMBL/GenBank/DDBJ databases">
        <title>Complete sequence of chromosome of Mycobacterium sp. KMS.</title>
        <authorList>
            <consortium name="US DOE Joint Genome Institute"/>
            <person name="Copeland A."/>
            <person name="Lucas S."/>
            <person name="Lapidus A."/>
            <person name="Barry K."/>
            <person name="Detter J.C."/>
            <person name="Glavina del Rio T."/>
            <person name="Hammon N."/>
            <person name="Israni S."/>
            <person name="Dalin E."/>
            <person name="Tice H."/>
            <person name="Pitluck S."/>
            <person name="Kiss H."/>
            <person name="Brettin T."/>
            <person name="Bruce D."/>
            <person name="Han C."/>
            <person name="Tapia R."/>
            <person name="Gilna P."/>
            <person name="Schmutz J."/>
            <person name="Larimer F."/>
            <person name="Land M."/>
            <person name="Hauser L."/>
            <person name="Kyrpides N."/>
            <person name="Mikhailova N."/>
            <person name="Miller C.D."/>
            <person name="Richardson P."/>
        </authorList>
    </citation>
    <scope>NUCLEOTIDE SEQUENCE [LARGE SCALE GENOMIC DNA]</scope>
    <source>
        <strain>KMS</strain>
    </source>
</reference>
<accession>A1UKX6</accession>
<evidence type="ECO:0000255" key="1">
    <source>
        <dbReference type="HAMAP-Rule" id="MF_00275"/>
    </source>
</evidence>
<proteinExistence type="inferred from homology"/>